<protein>
    <recommendedName>
        <fullName evidence="1">Phosphate acyltransferase</fullName>
        <ecNumber evidence="1">2.3.1.274</ecNumber>
    </recommendedName>
    <alternativeName>
        <fullName evidence="1">Acyl-ACP phosphotransacylase</fullName>
    </alternativeName>
    <alternativeName>
        <fullName evidence="1">Acyl-[acyl-carrier-protein]--phosphate acyltransferase</fullName>
    </alternativeName>
    <alternativeName>
        <fullName evidence="1">Phosphate-acyl-ACP acyltransferase</fullName>
    </alternativeName>
</protein>
<sequence>MTRLTLALDAMGGDFGPCVTVPAALQALASNPALNLLLVGDPAAITPLLAKVDSDLLSRLEVVPAESVIASDARPSQAIRASRGTSMRIALELIKDGRAQACVSAGNTGALMGLAKLLIKPLEGIERPALVSVLPHQQHGKTVVLDLGANVDCDSTMLVQFAVMGSVMAEEVLELKNPRVALLNIGEEESKGLSTIREAAAQLKEAPSINYIGYLEGNDLLTGKTDVMVCDGFVGNVTLKTVEGVVRMFLSLLKSPASGPGQKQKRSWWLKWLGRLLQKRLSKRFGHLNPDQYNGACLLGLRGTVIKSHGAANQRAFAVAIEQAMQTVRRQLPDRIAARLEAVLPKSD</sequence>
<comment type="function">
    <text evidence="1">Catalyzes the reversible formation of acyl-phosphate (acyl-PO(4)) from acyl-[acyl-carrier-protein] (acyl-ACP). This enzyme utilizes acyl-ACP as fatty acyl donor, but not acyl-CoA.</text>
</comment>
<comment type="catalytic activity">
    <reaction evidence="1">
        <text>a fatty acyl-[ACP] + phosphate = an acyl phosphate + holo-[ACP]</text>
        <dbReference type="Rhea" id="RHEA:42292"/>
        <dbReference type="Rhea" id="RHEA-COMP:9685"/>
        <dbReference type="Rhea" id="RHEA-COMP:14125"/>
        <dbReference type="ChEBI" id="CHEBI:43474"/>
        <dbReference type="ChEBI" id="CHEBI:59918"/>
        <dbReference type="ChEBI" id="CHEBI:64479"/>
        <dbReference type="ChEBI" id="CHEBI:138651"/>
        <dbReference type="EC" id="2.3.1.274"/>
    </reaction>
</comment>
<comment type="pathway">
    <text evidence="1">Lipid metabolism; phospholipid metabolism.</text>
</comment>
<comment type="subunit">
    <text evidence="1">Homodimer. Probably interacts with PlsY.</text>
</comment>
<comment type="subcellular location">
    <subcellularLocation>
        <location evidence="1">Cytoplasm</location>
    </subcellularLocation>
    <text evidence="1">Associated with the membrane possibly through PlsY.</text>
</comment>
<comment type="similarity">
    <text evidence="1">Belongs to the PlsX family.</text>
</comment>
<feature type="chain" id="PRO_1000201895" description="Phosphate acyltransferase">
    <location>
        <begin position="1"/>
        <end position="348"/>
    </location>
</feature>
<reference key="1">
    <citation type="submission" date="2009-07" db="EMBL/GenBank/DDBJ databases">
        <title>Complete sequence of Pectobacterium carotovorum subsp. carotovorum PC1.</title>
        <authorList>
            <consortium name="US DOE Joint Genome Institute"/>
            <person name="Lucas S."/>
            <person name="Copeland A."/>
            <person name="Lapidus A."/>
            <person name="Glavina del Rio T."/>
            <person name="Tice H."/>
            <person name="Bruce D."/>
            <person name="Goodwin L."/>
            <person name="Pitluck S."/>
            <person name="Munk A.C."/>
            <person name="Brettin T."/>
            <person name="Detter J.C."/>
            <person name="Han C."/>
            <person name="Tapia R."/>
            <person name="Larimer F."/>
            <person name="Land M."/>
            <person name="Hauser L."/>
            <person name="Kyrpides N."/>
            <person name="Mikhailova N."/>
            <person name="Balakrishnan V."/>
            <person name="Glasner J."/>
            <person name="Perna N.T."/>
        </authorList>
    </citation>
    <scope>NUCLEOTIDE SEQUENCE [LARGE SCALE GENOMIC DNA]</scope>
    <source>
        <strain>PC1</strain>
    </source>
</reference>
<dbReference type="EC" id="2.3.1.274" evidence="1"/>
<dbReference type="EMBL" id="CP001657">
    <property type="protein sequence ID" value="ACT13537.1"/>
    <property type="molecule type" value="Genomic_DNA"/>
</dbReference>
<dbReference type="RefSeq" id="WP_015840714.1">
    <property type="nucleotide sequence ID" value="NC_012917.1"/>
</dbReference>
<dbReference type="SMR" id="C6DKT6"/>
<dbReference type="STRING" id="561230.PC1_2506"/>
<dbReference type="GeneID" id="67794504"/>
<dbReference type="KEGG" id="pct:PC1_2506"/>
<dbReference type="eggNOG" id="COG0416">
    <property type="taxonomic scope" value="Bacteria"/>
</dbReference>
<dbReference type="HOGENOM" id="CLU_039379_1_0_6"/>
<dbReference type="OrthoDB" id="9806408at2"/>
<dbReference type="UniPathway" id="UPA00085"/>
<dbReference type="Proteomes" id="UP000002736">
    <property type="component" value="Chromosome"/>
</dbReference>
<dbReference type="GO" id="GO:0005737">
    <property type="term" value="C:cytoplasm"/>
    <property type="evidence" value="ECO:0007669"/>
    <property type="project" value="UniProtKB-SubCell"/>
</dbReference>
<dbReference type="GO" id="GO:0043811">
    <property type="term" value="F:phosphate:acyl-[acyl carrier protein] acyltransferase activity"/>
    <property type="evidence" value="ECO:0007669"/>
    <property type="project" value="UniProtKB-UniRule"/>
</dbReference>
<dbReference type="GO" id="GO:0006633">
    <property type="term" value="P:fatty acid biosynthetic process"/>
    <property type="evidence" value="ECO:0007669"/>
    <property type="project" value="UniProtKB-UniRule"/>
</dbReference>
<dbReference type="GO" id="GO:0008654">
    <property type="term" value="P:phospholipid biosynthetic process"/>
    <property type="evidence" value="ECO:0007669"/>
    <property type="project" value="UniProtKB-KW"/>
</dbReference>
<dbReference type="FunFam" id="3.40.718.10:FF:000008">
    <property type="entry name" value="Phosphate acyltransferase"/>
    <property type="match status" value="1"/>
</dbReference>
<dbReference type="Gene3D" id="3.40.718.10">
    <property type="entry name" value="Isopropylmalate Dehydrogenase"/>
    <property type="match status" value="1"/>
</dbReference>
<dbReference type="HAMAP" id="MF_00019">
    <property type="entry name" value="PlsX"/>
    <property type="match status" value="1"/>
</dbReference>
<dbReference type="InterPro" id="IPR003664">
    <property type="entry name" value="FA_synthesis"/>
</dbReference>
<dbReference type="InterPro" id="IPR012281">
    <property type="entry name" value="Phospholipid_synth_PlsX-like"/>
</dbReference>
<dbReference type="NCBIfam" id="TIGR00182">
    <property type="entry name" value="plsX"/>
    <property type="match status" value="1"/>
</dbReference>
<dbReference type="PANTHER" id="PTHR30100">
    <property type="entry name" value="FATTY ACID/PHOSPHOLIPID SYNTHESIS PROTEIN PLSX"/>
    <property type="match status" value="1"/>
</dbReference>
<dbReference type="PANTHER" id="PTHR30100:SF1">
    <property type="entry name" value="PHOSPHATE ACYLTRANSFERASE"/>
    <property type="match status" value="1"/>
</dbReference>
<dbReference type="Pfam" id="PF02504">
    <property type="entry name" value="FA_synthesis"/>
    <property type="match status" value="1"/>
</dbReference>
<dbReference type="PIRSF" id="PIRSF002465">
    <property type="entry name" value="Phsphlp_syn_PlsX"/>
    <property type="match status" value="1"/>
</dbReference>
<dbReference type="SUPFAM" id="SSF53659">
    <property type="entry name" value="Isocitrate/Isopropylmalate dehydrogenase-like"/>
    <property type="match status" value="1"/>
</dbReference>
<evidence type="ECO:0000255" key="1">
    <source>
        <dbReference type="HAMAP-Rule" id="MF_00019"/>
    </source>
</evidence>
<proteinExistence type="inferred from homology"/>
<gene>
    <name evidence="1" type="primary">plsX</name>
    <name type="ordered locus">PC1_2506</name>
</gene>
<organism>
    <name type="scientific">Pectobacterium carotovorum subsp. carotovorum (strain PC1)</name>
    <dbReference type="NCBI Taxonomy" id="561230"/>
    <lineage>
        <taxon>Bacteria</taxon>
        <taxon>Pseudomonadati</taxon>
        <taxon>Pseudomonadota</taxon>
        <taxon>Gammaproteobacteria</taxon>
        <taxon>Enterobacterales</taxon>
        <taxon>Pectobacteriaceae</taxon>
        <taxon>Pectobacterium</taxon>
    </lineage>
</organism>
<accession>C6DKT6</accession>
<keyword id="KW-0963">Cytoplasm</keyword>
<keyword id="KW-0444">Lipid biosynthesis</keyword>
<keyword id="KW-0443">Lipid metabolism</keyword>
<keyword id="KW-0594">Phospholipid biosynthesis</keyword>
<keyword id="KW-1208">Phospholipid metabolism</keyword>
<keyword id="KW-0808">Transferase</keyword>
<name>PLSX_PECCP</name>